<organism>
    <name type="scientific">Chlamydia trachomatis serovar L2b (strain UCH-1/proctitis)</name>
    <dbReference type="NCBI Taxonomy" id="471473"/>
    <lineage>
        <taxon>Bacteria</taxon>
        <taxon>Pseudomonadati</taxon>
        <taxon>Chlamydiota</taxon>
        <taxon>Chlamydiia</taxon>
        <taxon>Chlamydiales</taxon>
        <taxon>Chlamydiaceae</taxon>
        <taxon>Chlamydia/Chlamydophila group</taxon>
        <taxon>Chlamydia</taxon>
    </lineage>
</organism>
<dbReference type="EC" id="3.1.-.-" evidence="1"/>
<dbReference type="EMBL" id="AM884177">
    <property type="protein sequence ID" value="CAP06829.1"/>
    <property type="molecule type" value="Genomic_DNA"/>
</dbReference>
<dbReference type="SMR" id="B0BBG4"/>
<dbReference type="KEGG" id="ctl:CTLon_0431"/>
<dbReference type="HOGENOM" id="CLU_098240_2_0_0"/>
<dbReference type="Proteomes" id="UP001154401">
    <property type="component" value="Chromosome"/>
</dbReference>
<dbReference type="GO" id="GO:0005829">
    <property type="term" value="C:cytosol"/>
    <property type="evidence" value="ECO:0007669"/>
    <property type="project" value="TreeGrafter"/>
</dbReference>
<dbReference type="GO" id="GO:0004518">
    <property type="term" value="F:nuclease activity"/>
    <property type="evidence" value="ECO:0007669"/>
    <property type="project" value="UniProtKB-KW"/>
</dbReference>
<dbReference type="GO" id="GO:0000967">
    <property type="term" value="P:rRNA 5'-end processing"/>
    <property type="evidence" value="ECO:0007669"/>
    <property type="project" value="UniProtKB-UniRule"/>
</dbReference>
<dbReference type="CDD" id="cd16964">
    <property type="entry name" value="YqgF"/>
    <property type="match status" value="1"/>
</dbReference>
<dbReference type="Gene3D" id="3.30.420.140">
    <property type="entry name" value="YqgF/RNase H-like domain"/>
    <property type="match status" value="1"/>
</dbReference>
<dbReference type="HAMAP" id="MF_00651">
    <property type="entry name" value="Nuclease_YqgF"/>
    <property type="match status" value="1"/>
</dbReference>
<dbReference type="InterPro" id="IPR012337">
    <property type="entry name" value="RNaseH-like_sf"/>
</dbReference>
<dbReference type="InterPro" id="IPR005227">
    <property type="entry name" value="YqgF"/>
</dbReference>
<dbReference type="InterPro" id="IPR006641">
    <property type="entry name" value="YqgF/RNaseH-like_dom"/>
</dbReference>
<dbReference type="InterPro" id="IPR037027">
    <property type="entry name" value="YqgF/RNaseH-like_dom_sf"/>
</dbReference>
<dbReference type="NCBIfam" id="TIGR00250">
    <property type="entry name" value="RNAse_H_YqgF"/>
    <property type="match status" value="1"/>
</dbReference>
<dbReference type="PANTHER" id="PTHR33317">
    <property type="entry name" value="POLYNUCLEOTIDYL TRANSFERASE, RIBONUCLEASE H-LIKE SUPERFAMILY PROTEIN"/>
    <property type="match status" value="1"/>
</dbReference>
<dbReference type="PANTHER" id="PTHR33317:SF4">
    <property type="entry name" value="POLYNUCLEOTIDYL TRANSFERASE, RIBONUCLEASE H-LIKE SUPERFAMILY PROTEIN"/>
    <property type="match status" value="1"/>
</dbReference>
<dbReference type="Pfam" id="PF03652">
    <property type="entry name" value="RuvX"/>
    <property type="match status" value="1"/>
</dbReference>
<dbReference type="SMART" id="SM00732">
    <property type="entry name" value="YqgFc"/>
    <property type="match status" value="1"/>
</dbReference>
<dbReference type="SUPFAM" id="SSF53098">
    <property type="entry name" value="Ribonuclease H-like"/>
    <property type="match status" value="1"/>
</dbReference>
<sequence length="148" mass="16212">MNIAKQQQAFLGIDYGKKRIGLAFASSPLLIPLPIGNVEARSSLTLTAQALVSIIKERAVTTVVFGNPLPMQKAYASSVQSEIQELAALIQEMTAIEVILWDERLSSAQAERMLKSDCGLNRKQRKNSSDSLAATLILSSFLDSRKLY</sequence>
<feature type="chain" id="PRO_1000131012" description="Putative pre-16S rRNA nuclease">
    <location>
        <begin position="1"/>
        <end position="148"/>
    </location>
</feature>
<gene>
    <name type="ordered locus">CTLon_0431</name>
</gene>
<comment type="function">
    <text evidence="1">Could be a nuclease involved in processing of the 5'-end of pre-16S rRNA.</text>
</comment>
<comment type="subcellular location">
    <subcellularLocation>
        <location evidence="1">Cytoplasm</location>
    </subcellularLocation>
</comment>
<comment type="similarity">
    <text evidence="1">Belongs to the YqgF nuclease family.</text>
</comment>
<name>YQGF_CHLTB</name>
<protein>
    <recommendedName>
        <fullName evidence="1">Putative pre-16S rRNA nuclease</fullName>
        <ecNumber evidence="1">3.1.-.-</ecNumber>
    </recommendedName>
</protein>
<evidence type="ECO:0000255" key="1">
    <source>
        <dbReference type="HAMAP-Rule" id="MF_00651"/>
    </source>
</evidence>
<keyword id="KW-0963">Cytoplasm</keyword>
<keyword id="KW-0378">Hydrolase</keyword>
<keyword id="KW-0540">Nuclease</keyword>
<keyword id="KW-0690">Ribosome biogenesis</keyword>
<proteinExistence type="inferred from homology"/>
<accession>B0BBG4</accession>
<reference key="1">
    <citation type="journal article" date="2008" name="Genome Res.">
        <title>Chlamydia trachomatis: genome sequence analysis of lymphogranuloma venereum isolates.</title>
        <authorList>
            <person name="Thomson N.R."/>
            <person name="Holden M.T.G."/>
            <person name="Carder C."/>
            <person name="Lennard N."/>
            <person name="Lockey S.J."/>
            <person name="Marsh P."/>
            <person name="Skipp P."/>
            <person name="O'Connor C.D."/>
            <person name="Goodhead I."/>
            <person name="Norbertzcak H."/>
            <person name="Harris B."/>
            <person name="Ormond D."/>
            <person name="Rance R."/>
            <person name="Quail M.A."/>
            <person name="Parkhill J."/>
            <person name="Stephens R.S."/>
            <person name="Clarke I.N."/>
        </authorList>
    </citation>
    <scope>NUCLEOTIDE SEQUENCE [LARGE SCALE GENOMIC DNA]</scope>
    <source>
        <strain>UCH-1/proctitis</strain>
    </source>
</reference>